<keyword id="KW-0975">Bacterial flagellum</keyword>
<keyword id="KW-0175">Coiled coil</keyword>
<keyword id="KW-0964">Secreted</keyword>
<protein>
    <recommendedName>
        <fullName>Polar flagellin A</fullName>
    </recommendedName>
</protein>
<accession>Q56703</accession>
<evidence type="ECO:0000255" key="1"/>
<evidence type="ECO:0000305" key="2"/>
<dbReference type="EMBL" id="AF069392">
    <property type="protein sequence ID" value="AAC27801.1"/>
    <property type="molecule type" value="Genomic_DNA"/>
</dbReference>
<dbReference type="EMBL" id="BA000031">
    <property type="protein sequence ID" value="BAC60521.1"/>
    <property type="molecule type" value="Genomic_DNA"/>
</dbReference>
<dbReference type="RefSeq" id="NP_798637.1">
    <property type="nucleotide sequence ID" value="NC_004603.1"/>
</dbReference>
<dbReference type="RefSeq" id="WP_005457770.1">
    <property type="nucleotide sequence ID" value="NC_004603.1"/>
</dbReference>
<dbReference type="SMR" id="Q56703"/>
<dbReference type="GeneID" id="1189771"/>
<dbReference type="KEGG" id="vpa:VP2258"/>
<dbReference type="PATRIC" id="fig|223926.6.peg.2161"/>
<dbReference type="eggNOG" id="COG1344">
    <property type="taxonomic scope" value="Bacteria"/>
</dbReference>
<dbReference type="HOGENOM" id="CLU_011142_4_0_6"/>
<dbReference type="Proteomes" id="UP000002493">
    <property type="component" value="Chromosome 1"/>
</dbReference>
<dbReference type="GO" id="GO:0009288">
    <property type="term" value="C:bacterial-type flagellum"/>
    <property type="evidence" value="ECO:0007669"/>
    <property type="project" value="UniProtKB-SubCell"/>
</dbReference>
<dbReference type="GO" id="GO:0005576">
    <property type="term" value="C:extracellular region"/>
    <property type="evidence" value="ECO:0007669"/>
    <property type="project" value="UniProtKB-SubCell"/>
</dbReference>
<dbReference type="GO" id="GO:0005198">
    <property type="term" value="F:structural molecule activity"/>
    <property type="evidence" value="ECO:0007669"/>
    <property type="project" value="InterPro"/>
</dbReference>
<dbReference type="Gene3D" id="3.30.70.2120">
    <property type="match status" value="1"/>
</dbReference>
<dbReference type="Gene3D" id="1.20.1330.10">
    <property type="entry name" value="f41 fragment of flagellin, N-terminal domain"/>
    <property type="match status" value="1"/>
</dbReference>
<dbReference type="Gene3D" id="6.10.10.10">
    <property type="entry name" value="Flagellar export chaperone, C-terminal domain"/>
    <property type="match status" value="1"/>
</dbReference>
<dbReference type="InterPro" id="IPR001492">
    <property type="entry name" value="Flagellin"/>
</dbReference>
<dbReference type="InterPro" id="IPR046358">
    <property type="entry name" value="Flagellin_C"/>
</dbReference>
<dbReference type="InterPro" id="IPR042187">
    <property type="entry name" value="Flagellin_C_sub2"/>
</dbReference>
<dbReference type="InterPro" id="IPR010810">
    <property type="entry name" value="Flagellin_hook_IN_motif"/>
</dbReference>
<dbReference type="InterPro" id="IPR001029">
    <property type="entry name" value="Flagellin_N"/>
</dbReference>
<dbReference type="NCBIfam" id="NF006466">
    <property type="entry name" value="PRK08869.1-1"/>
    <property type="match status" value="1"/>
</dbReference>
<dbReference type="NCBIfam" id="NF006468">
    <property type="entry name" value="PRK08869.1-3"/>
    <property type="match status" value="1"/>
</dbReference>
<dbReference type="PANTHER" id="PTHR42792">
    <property type="entry name" value="FLAGELLIN"/>
    <property type="match status" value="1"/>
</dbReference>
<dbReference type="PANTHER" id="PTHR42792:SF2">
    <property type="entry name" value="FLAGELLIN"/>
    <property type="match status" value="1"/>
</dbReference>
<dbReference type="Pfam" id="PF00700">
    <property type="entry name" value="Flagellin_C"/>
    <property type="match status" value="1"/>
</dbReference>
<dbReference type="Pfam" id="PF07196">
    <property type="entry name" value="Flagellin_IN"/>
    <property type="match status" value="1"/>
</dbReference>
<dbReference type="Pfam" id="PF00669">
    <property type="entry name" value="Flagellin_N"/>
    <property type="match status" value="1"/>
</dbReference>
<dbReference type="PRINTS" id="PR00207">
    <property type="entry name" value="FLAGELLIN"/>
</dbReference>
<dbReference type="SUPFAM" id="SSF64518">
    <property type="entry name" value="Phase 1 flagellin"/>
    <property type="match status" value="1"/>
</dbReference>
<feature type="chain" id="PRO_0000182653" description="Polar flagellin A">
    <location>
        <begin position="1"/>
        <end position="376"/>
    </location>
</feature>
<feature type="coiled-coil region" evidence="1">
    <location>
        <begin position="103"/>
        <end position="128"/>
    </location>
</feature>
<feature type="coiled-coil region" evidence="1">
    <location>
        <begin position="310"/>
        <end position="338"/>
    </location>
</feature>
<gene>
    <name type="primary">flaA</name>
    <name type="ordered locus">VP2258</name>
</gene>
<organism>
    <name type="scientific">Vibrio parahaemolyticus serotype O3:K6 (strain RIMD 2210633)</name>
    <dbReference type="NCBI Taxonomy" id="223926"/>
    <lineage>
        <taxon>Bacteria</taxon>
        <taxon>Pseudomonadati</taxon>
        <taxon>Pseudomonadota</taxon>
        <taxon>Gammaproteobacteria</taxon>
        <taxon>Vibrionales</taxon>
        <taxon>Vibrionaceae</taxon>
        <taxon>Vibrio</taxon>
    </lineage>
</organism>
<sequence>MAINVNTNVSAMTAQRYLNHAAEGQQKSMERLSSGYKINSAKDDAAGLQISNRLNAQSRGLDMAVKNANDGISIAQVAEGAMNESTNILQRMRDLSLQSANGSNSKAERVAIQEEVTALNDELNRIAETTSFGGNKLLNGTYGTQSFQIGADSGEAVMLSMGSLRSDTSAMGGKSYSAEEGKDASWTVGDKTELKMSYTNKQGEEKELTIKAKQGDDIEQLATYINGQSEDVKASVGEDGKLQVFASTQKVNGEVEFSGNLAGEIGFGDAKDVTVKDIDVTTVAGSQEAVAVIDGALKSVDSQRASLGAFQNRFNHAISNLDNINENVNASNSRIKDTDYAKETTAMTKSQILQQASTSILAQAKQSPSAALSLLG</sequence>
<comment type="function">
    <text>Flagellin is the subunit protein which polymerizes to form the filaments of bacterial flagella. FlaA is not essential for polar flagellar synthesis and swimming motility. Homomer of FlaA is able to form a functional filament.</text>
</comment>
<comment type="subunit">
    <text>Heteromer of multiple flagellin subunits including FlaA, FlaB/D, FlaC, FlaE and FlaF.</text>
</comment>
<comment type="subcellular location">
    <subcellularLocation>
        <location>Secreted</location>
    </subcellularLocation>
    <subcellularLocation>
        <location>Bacterial flagellum</location>
    </subcellularLocation>
</comment>
<comment type="miscellaneous">
    <text>V.parahaemolyticus possesses two flagellar systems: a single polar flagellum propels the bacterium in liquid (swimming), while multiple lateral (peritrichous) flagella move the bacterium over surfaces (swarming). The polar flagellum is synthesized constitutively but lateral flagella are produced only under conditions in which the polar flagellum is not functional.</text>
</comment>
<comment type="similarity">
    <text evidence="2">Belongs to the bacterial flagellin family.</text>
</comment>
<proteinExistence type="inferred from homology"/>
<name>FLAA_VIBPA</name>
<reference key="1">
    <citation type="journal article" date="1995" name="J. Bacteriol.">
        <title>Genetic and molecular characterization of the polar flagellum of Vibrio parahaemolyticus.</title>
        <authorList>
            <person name="McCarter L.L."/>
        </authorList>
    </citation>
    <scope>NUCLEOTIDE SEQUENCE [GENOMIC DNA]</scope>
    <source>
        <strain>BB22</strain>
    </source>
</reference>
<reference key="2">
    <citation type="journal article" date="2003" name="Lancet">
        <title>Genome sequence of Vibrio parahaemolyticus: a pathogenic mechanism distinct from that of V. cholerae.</title>
        <authorList>
            <person name="Makino K."/>
            <person name="Oshima K."/>
            <person name="Kurokawa K."/>
            <person name="Yokoyama K."/>
            <person name="Uda T."/>
            <person name="Tagomori K."/>
            <person name="Iijima Y."/>
            <person name="Najima M."/>
            <person name="Nakano M."/>
            <person name="Yamashita A."/>
            <person name="Kubota Y."/>
            <person name="Kimura S."/>
            <person name="Yasunaga T."/>
            <person name="Honda T."/>
            <person name="Shinagawa H."/>
            <person name="Hattori M."/>
            <person name="Iida T."/>
        </authorList>
    </citation>
    <scope>NUCLEOTIDE SEQUENCE [LARGE SCALE GENOMIC DNA]</scope>
    <source>
        <strain>RIMD 2210633</strain>
    </source>
</reference>